<comment type="function">
    <text evidence="1">Catalyzes the attachment of glutamate to tRNA(Glu) in a two-step reaction: glutamate is first activated by ATP to form Glu-AMP and then transferred to the acceptor end of tRNA(Glu).</text>
</comment>
<comment type="catalytic activity">
    <reaction evidence="1">
        <text>tRNA(Glu) + L-glutamate + ATP = L-glutamyl-tRNA(Glu) + AMP + diphosphate</text>
        <dbReference type="Rhea" id="RHEA:23540"/>
        <dbReference type="Rhea" id="RHEA-COMP:9663"/>
        <dbReference type="Rhea" id="RHEA-COMP:9680"/>
        <dbReference type="ChEBI" id="CHEBI:29985"/>
        <dbReference type="ChEBI" id="CHEBI:30616"/>
        <dbReference type="ChEBI" id="CHEBI:33019"/>
        <dbReference type="ChEBI" id="CHEBI:78442"/>
        <dbReference type="ChEBI" id="CHEBI:78520"/>
        <dbReference type="ChEBI" id="CHEBI:456215"/>
        <dbReference type="EC" id="6.1.1.17"/>
    </reaction>
</comment>
<comment type="cofactor">
    <cofactor evidence="1">
        <name>Zn(2+)</name>
        <dbReference type="ChEBI" id="CHEBI:29105"/>
    </cofactor>
    <text evidence="1">Binds 1 zinc ion per subunit.</text>
</comment>
<comment type="subunit">
    <text evidence="1">Monomer.</text>
</comment>
<comment type="subcellular location">
    <subcellularLocation>
        <location evidence="1">Cytoplasm</location>
    </subcellularLocation>
</comment>
<comment type="similarity">
    <text evidence="1">Belongs to the class-I aminoacyl-tRNA synthetase family. Glutamate--tRNA ligase type 1 subfamily.</text>
</comment>
<organism>
    <name type="scientific">Methylococcus capsulatus (strain ATCC 33009 / NCIMB 11132 / Bath)</name>
    <dbReference type="NCBI Taxonomy" id="243233"/>
    <lineage>
        <taxon>Bacteria</taxon>
        <taxon>Pseudomonadati</taxon>
        <taxon>Pseudomonadota</taxon>
        <taxon>Gammaproteobacteria</taxon>
        <taxon>Methylococcales</taxon>
        <taxon>Methylococcaceae</taxon>
        <taxon>Methylococcus</taxon>
    </lineage>
</organism>
<gene>
    <name evidence="1" type="primary">gltX2</name>
    <name type="synonym">gltX-2</name>
    <name type="ordered locus">MCA1234</name>
</gene>
<protein>
    <recommendedName>
        <fullName evidence="1">Glutamate--tRNA ligase 2</fullName>
        <ecNumber evidence="1">6.1.1.17</ecNumber>
    </recommendedName>
    <alternativeName>
        <fullName evidence="1">Glutamyl-tRNA synthetase 2</fullName>
        <shortName evidence="1">GluRS 2</shortName>
    </alternativeName>
</protein>
<feature type="chain" id="PRO_0000119598" description="Glutamate--tRNA ligase 2">
    <location>
        <begin position="1"/>
        <end position="468"/>
    </location>
</feature>
<feature type="short sequence motif" description="'HIGH' region" evidence="1">
    <location>
        <begin position="9"/>
        <end position="19"/>
    </location>
</feature>
<feature type="short sequence motif" description="'KMSKS' region" evidence="1">
    <location>
        <begin position="236"/>
        <end position="240"/>
    </location>
</feature>
<feature type="binding site" evidence="1">
    <location>
        <position position="98"/>
    </location>
    <ligand>
        <name>Zn(2+)</name>
        <dbReference type="ChEBI" id="CHEBI:29105"/>
    </ligand>
</feature>
<feature type="binding site" evidence="1">
    <location>
        <position position="100"/>
    </location>
    <ligand>
        <name>Zn(2+)</name>
        <dbReference type="ChEBI" id="CHEBI:29105"/>
    </ligand>
</feature>
<feature type="binding site" evidence="1">
    <location>
        <position position="125"/>
    </location>
    <ligand>
        <name>Zn(2+)</name>
        <dbReference type="ChEBI" id="CHEBI:29105"/>
    </ligand>
</feature>
<feature type="binding site" evidence="1">
    <location>
        <position position="127"/>
    </location>
    <ligand>
        <name>Zn(2+)</name>
        <dbReference type="ChEBI" id="CHEBI:29105"/>
    </ligand>
</feature>
<feature type="binding site" evidence="1">
    <location>
        <position position="239"/>
    </location>
    <ligand>
        <name>ATP</name>
        <dbReference type="ChEBI" id="CHEBI:30616"/>
    </ligand>
</feature>
<reference key="1">
    <citation type="journal article" date="2004" name="PLoS Biol.">
        <title>Genomic insights into methanotrophy: the complete genome sequence of Methylococcus capsulatus (Bath).</title>
        <authorList>
            <person name="Ward N.L."/>
            <person name="Larsen O."/>
            <person name="Sakwa J."/>
            <person name="Bruseth L."/>
            <person name="Khouri H.M."/>
            <person name="Durkin A.S."/>
            <person name="Dimitrov G."/>
            <person name="Jiang L."/>
            <person name="Scanlan D."/>
            <person name="Kang K.H."/>
            <person name="Lewis M.R."/>
            <person name="Nelson K.E."/>
            <person name="Methe B.A."/>
            <person name="Wu M."/>
            <person name="Heidelberg J.F."/>
            <person name="Paulsen I.T."/>
            <person name="Fouts D.E."/>
            <person name="Ravel J."/>
            <person name="Tettelin H."/>
            <person name="Ren Q."/>
            <person name="Read T.D."/>
            <person name="DeBoy R.T."/>
            <person name="Seshadri R."/>
            <person name="Salzberg S.L."/>
            <person name="Jensen H.B."/>
            <person name="Birkeland N.K."/>
            <person name="Nelson W.C."/>
            <person name="Dodson R.J."/>
            <person name="Grindhaug S.H."/>
            <person name="Holt I.E."/>
            <person name="Eidhammer I."/>
            <person name="Jonasen I."/>
            <person name="Vanaken S."/>
            <person name="Utterback T.R."/>
            <person name="Feldblyum T.V."/>
            <person name="Fraser C.M."/>
            <person name="Lillehaug J.R."/>
            <person name="Eisen J.A."/>
        </authorList>
    </citation>
    <scope>NUCLEOTIDE SEQUENCE [LARGE SCALE GENOMIC DNA]</scope>
    <source>
        <strain>ATCC 33009 / NCIMB 11132 / Bath</strain>
    </source>
</reference>
<keyword id="KW-0030">Aminoacyl-tRNA synthetase</keyword>
<keyword id="KW-0067">ATP-binding</keyword>
<keyword id="KW-0963">Cytoplasm</keyword>
<keyword id="KW-0436">Ligase</keyword>
<keyword id="KW-0479">Metal-binding</keyword>
<keyword id="KW-0547">Nucleotide-binding</keyword>
<keyword id="KW-0648">Protein biosynthesis</keyword>
<keyword id="KW-1185">Reference proteome</keyword>
<keyword id="KW-0862">Zinc</keyword>
<proteinExistence type="inferred from homology"/>
<accession>Q609J9</accession>
<sequence length="468" mass="53475">MTHRTRFAPSPTGHLHIGGARTALFSWLYARKHGGTFILRIEDTDLERSTVESVNAILEGMTWLGLEYDEGPFYQTHRFDRYREVMEQLLEEGHAYRCYCTKEELDELRAGQMERKEKPRYDGRCRHRSEPRPGVLPVIRFRNPTEGEVAWDDLVRGRIAFQNSELDDLIIARSDGTPTYNFTVVVDDLDMKISHVIRGDDHVNNTPRQINILKALGVEPPRYGHVPMILGADGARLSKRHGAVSVMQYRDEGYLPEALLNYLVRLGWSHGDQEIFSVDEMIEYFDANAINHSAATFNPDKLLWLNHHYLMHSDPAHVAHHLRWHLGRLDIDPTEGPDPVDVVVAQRERCKTLVEMAQASRFFYRDFDDYDPKSAQKYLTAASVPALESLRRHLAVVRSWEKEFLHAVLVATGEEMGLKLGAVAQPLRVAVAGTAVSPPMDVTLHLLGQLRTLNRIDRALQYIEAKKD</sequence>
<name>SYE2_METCA</name>
<dbReference type="EC" id="6.1.1.17" evidence="1"/>
<dbReference type="EMBL" id="AE017282">
    <property type="protein sequence ID" value="AAU92495.1"/>
    <property type="molecule type" value="Genomic_DNA"/>
</dbReference>
<dbReference type="RefSeq" id="WP_010960518.1">
    <property type="nucleotide sequence ID" value="NC_002977.6"/>
</dbReference>
<dbReference type="SMR" id="Q609J9"/>
<dbReference type="STRING" id="243233.MCA1234"/>
<dbReference type="GeneID" id="88223519"/>
<dbReference type="KEGG" id="mca:MCA1234"/>
<dbReference type="eggNOG" id="COG0008">
    <property type="taxonomic scope" value="Bacteria"/>
</dbReference>
<dbReference type="HOGENOM" id="CLU_015768_6_0_6"/>
<dbReference type="Proteomes" id="UP000006821">
    <property type="component" value="Chromosome"/>
</dbReference>
<dbReference type="GO" id="GO:0005829">
    <property type="term" value="C:cytosol"/>
    <property type="evidence" value="ECO:0007669"/>
    <property type="project" value="TreeGrafter"/>
</dbReference>
<dbReference type="GO" id="GO:0005524">
    <property type="term" value="F:ATP binding"/>
    <property type="evidence" value="ECO:0007669"/>
    <property type="project" value="UniProtKB-UniRule"/>
</dbReference>
<dbReference type="GO" id="GO:0004818">
    <property type="term" value="F:glutamate-tRNA ligase activity"/>
    <property type="evidence" value="ECO:0007669"/>
    <property type="project" value="UniProtKB-UniRule"/>
</dbReference>
<dbReference type="GO" id="GO:0000049">
    <property type="term" value="F:tRNA binding"/>
    <property type="evidence" value="ECO:0007669"/>
    <property type="project" value="InterPro"/>
</dbReference>
<dbReference type="GO" id="GO:0008270">
    <property type="term" value="F:zinc ion binding"/>
    <property type="evidence" value="ECO:0007669"/>
    <property type="project" value="UniProtKB-UniRule"/>
</dbReference>
<dbReference type="GO" id="GO:0006424">
    <property type="term" value="P:glutamyl-tRNA aminoacylation"/>
    <property type="evidence" value="ECO:0007669"/>
    <property type="project" value="UniProtKB-UniRule"/>
</dbReference>
<dbReference type="CDD" id="cd00808">
    <property type="entry name" value="GluRS_core"/>
    <property type="match status" value="1"/>
</dbReference>
<dbReference type="FunFam" id="3.40.50.620:FF:000007">
    <property type="entry name" value="Glutamate--tRNA ligase"/>
    <property type="match status" value="1"/>
</dbReference>
<dbReference type="Gene3D" id="1.10.10.350">
    <property type="match status" value="1"/>
</dbReference>
<dbReference type="Gene3D" id="3.40.50.620">
    <property type="entry name" value="HUPs"/>
    <property type="match status" value="1"/>
</dbReference>
<dbReference type="HAMAP" id="MF_00022">
    <property type="entry name" value="Glu_tRNA_synth_type1"/>
    <property type="match status" value="1"/>
</dbReference>
<dbReference type="InterPro" id="IPR045462">
    <property type="entry name" value="aa-tRNA-synth_I_cd-bd"/>
</dbReference>
<dbReference type="InterPro" id="IPR020751">
    <property type="entry name" value="aa-tRNA-synth_I_codon-bd_sub2"/>
</dbReference>
<dbReference type="InterPro" id="IPR001412">
    <property type="entry name" value="aa-tRNA-synth_I_CS"/>
</dbReference>
<dbReference type="InterPro" id="IPR008925">
    <property type="entry name" value="aa_tRNA-synth_I_cd-bd_sf"/>
</dbReference>
<dbReference type="InterPro" id="IPR004527">
    <property type="entry name" value="Glu-tRNA-ligase_bac/mito"/>
</dbReference>
<dbReference type="InterPro" id="IPR000924">
    <property type="entry name" value="Glu/Gln-tRNA-synth"/>
</dbReference>
<dbReference type="InterPro" id="IPR020058">
    <property type="entry name" value="Glu/Gln-tRNA-synth_Ib_cat-dom"/>
</dbReference>
<dbReference type="InterPro" id="IPR049940">
    <property type="entry name" value="GluQ/Sye"/>
</dbReference>
<dbReference type="InterPro" id="IPR033910">
    <property type="entry name" value="GluRS_core"/>
</dbReference>
<dbReference type="InterPro" id="IPR014729">
    <property type="entry name" value="Rossmann-like_a/b/a_fold"/>
</dbReference>
<dbReference type="NCBIfam" id="TIGR00464">
    <property type="entry name" value="gltX_bact"/>
    <property type="match status" value="1"/>
</dbReference>
<dbReference type="PANTHER" id="PTHR43311">
    <property type="entry name" value="GLUTAMATE--TRNA LIGASE"/>
    <property type="match status" value="1"/>
</dbReference>
<dbReference type="PANTHER" id="PTHR43311:SF2">
    <property type="entry name" value="GLUTAMATE--TRNA LIGASE, MITOCHONDRIAL-RELATED"/>
    <property type="match status" value="1"/>
</dbReference>
<dbReference type="Pfam" id="PF19269">
    <property type="entry name" value="Anticodon_2"/>
    <property type="match status" value="1"/>
</dbReference>
<dbReference type="Pfam" id="PF00749">
    <property type="entry name" value="tRNA-synt_1c"/>
    <property type="match status" value="1"/>
</dbReference>
<dbReference type="PRINTS" id="PR00987">
    <property type="entry name" value="TRNASYNTHGLU"/>
</dbReference>
<dbReference type="SUPFAM" id="SSF48163">
    <property type="entry name" value="An anticodon-binding domain of class I aminoacyl-tRNA synthetases"/>
    <property type="match status" value="1"/>
</dbReference>
<dbReference type="SUPFAM" id="SSF52374">
    <property type="entry name" value="Nucleotidylyl transferase"/>
    <property type="match status" value="1"/>
</dbReference>
<dbReference type="PROSITE" id="PS00178">
    <property type="entry name" value="AA_TRNA_LIGASE_I"/>
    <property type="match status" value="1"/>
</dbReference>
<evidence type="ECO:0000255" key="1">
    <source>
        <dbReference type="HAMAP-Rule" id="MF_00022"/>
    </source>
</evidence>